<organism evidence="18">
    <name type="scientific">Toxoplasma gondii</name>
    <dbReference type="NCBI Taxonomy" id="5811"/>
    <lineage>
        <taxon>Eukaryota</taxon>
        <taxon>Sar</taxon>
        <taxon>Alveolata</taxon>
        <taxon>Apicomplexa</taxon>
        <taxon>Conoidasida</taxon>
        <taxon>Coccidia</taxon>
        <taxon>Eucoccidiorida</taxon>
        <taxon>Eimeriorina</taxon>
        <taxon>Sarcocystidae</taxon>
        <taxon>Toxoplasma</taxon>
    </lineage>
</organism>
<sequence length="549" mass="60591">MATKLARLATWLVLVGCLLWRAGAVQLSPPNSRTNDLASGTPHVARGDTEAQSGTGDDSDFPQAVVEEVADMSGGRVPRVPASSTTTSASEGIFRRLVRRLRRGRGTADGAGVADETHQGPRPPLRKRLAQHFRRLRGFFGRLTPRWLSGLGRRAQRWWRGRQRPLLDPSFHGLEAGDSFMRDLLKREEELIGYCREEALKEPAAMVEAVTATVWPQNAETTVDSLLSQGERKLKLVEPLRVGDRSVVFLVRDVERLEDFALKVFTMGAENSRSELERLHEATFAAARLLGESPEEARDRRRLLLPSDAVAVQSQPPFAQLSPGQDDYAVANYLLLMPAASVDLELLFSTLDFVYVFRGDEGILALHILTAQLIRLAANLQSKGLVHGHFTPDNLFIMPDGRLMLGDVSALWKVGTRGPASSVPVTYAPREFLNASTATFTHALNAWQLGLSIYRVWCLFLPFGLVTPGIKGSWKRPSLRVPGTDSLAFGSCTPLPDFVKTLIGRFLNFDRRRRLLPLEAMETPEFLQLQNEISSSLSTGQPTAAPSVA</sequence>
<reference evidence="18" key="1">
    <citation type="journal article" date="2011" name="Proc. Natl. Acad. Sci. U.S.A.">
        <title>Polymorphic family of injected pseudokinases is paramount in Toxoplasma virulence.</title>
        <authorList>
            <person name="Reese M.L."/>
            <person name="Zeiner G.M."/>
            <person name="Saeij J.P."/>
            <person name="Boothroyd J.C."/>
            <person name="Boyle J.P."/>
        </authorList>
    </citation>
    <scope>NUCLEOTIDE SEQUENCE [GENOMIC DNA]</scope>
    <scope>FUNCTION</scope>
    <scope>POLYMORPHISM</scope>
    <scope>DISRUPTION PHENOTYPE</scope>
    <source>
        <strain evidence="18">RH</strain>
    </source>
</reference>
<reference evidence="21" key="2">
    <citation type="journal article" date="2011" name="Proc. Natl. Acad. Sci. U.S.A.">
        <title>Virulence differences in Toxoplasma mediated by amplification of a family of polymorphic pseudokinases.</title>
        <authorList>
            <person name="Behnke M.S."/>
            <person name="Khan A."/>
            <person name="Wootton J.C."/>
            <person name="Dubey J.P."/>
            <person name="Tang K."/>
            <person name="Sibley L.D."/>
        </authorList>
    </citation>
    <scope>NUCLEOTIDE SEQUENCE [GENOMIC DNA]</scope>
    <scope>FUNCTION</scope>
    <scope>POLYMORPHISM</scope>
    <scope>DISRUPTION PHENOTYPE</scope>
    <source>
        <strain evidence="21">GT1</strain>
        <strain evidence="22">VEG</strain>
    </source>
</reference>
<reference evidence="19" key="3">
    <citation type="journal article" date="2012" name="PLoS Pathog.">
        <title>The rhoptry proteins ROP18 and ROP5 mediate Toxoplasma gondii evasion of the murine, but not the human, interferon-gamma response.</title>
        <authorList>
            <person name="Niedelman W."/>
            <person name="Gold D.A."/>
            <person name="Rosowski E.E."/>
            <person name="Sprokholt J.K."/>
            <person name="Lim D."/>
            <person name="Farid Arenas A."/>
            <person name="Melo M.B."/>
            <person name="Spooner E."/>
            <person name="Yaffe M.B."/>
            <person name="Saeij J.P."/>
        </authorList>
    </citation>
    <scope>NUCLEOTIDE SEQUENCE [GENOMIC DNA]</scope>
    <scope>FUNCTION</scope>
    <scope>INTERACTION WITH MOUSE IRGA6/IIGP1</scope>
    <scope>POLYMORPHISM</scope>
    <source>
        <strain evidence="20">CAST</strain>
        <strain evidence="19">P89</strain>
    </source>
</reference>
<reference evidence="24" key="4">
    <citation type="submission" date="2020-03" db="EMBL/GenBank/DDBJ databases">
        <title>Genome sequence of Toxoplasma gondii RH-88 strain.</title>
        <authorList>
            <person name="Lorenzi H.A."/>
            <person name="Venepally P."/>
            <person name="Rozenberg A."/>
            <person name="Sibley D."/>
        </authorList>
    </citation>
    <scope>NUCLEOTIDE SEQUENCE [LARGE SCALE GENOMIC DNA]</scope>
    <source>
        <strain evidence="24">RH-88</strain>
    </source>
</reference>
<reference evidence="17" key="5">
    <citation type="journal article" date="2005" name="J. Biol. Chem.">
        <title>Proteomic analysis of rhoptry organelles reveals many novel constituents for host-parasite interactions in Toxoplasma gondii.</title>
        <authorList>
            <person name="Bradley P.J."/>
            <person name="Ward C."/>
            <person name="Cheng S.J."/>
            <person name="Alexander D.L."/>
            <person name="Coller S."/>
            <person name="Coombs G.H."/>
            <person name="Dunn J.D."/>
            <person name="Ferguson D.J."/>
            <person name="Sanderson S.J."/>
            <person name="Wastling J.M."/>
            <person name="Boothroyd J.C."/>
        </authorList>
    </citation>
    <scope>SUBCELLULAR LOCATION</scope>
</reference>
<reference evidence="17" key="6">
    <citation type="journal article" date="2012" name="PLoS Biol.">
        <title>A Toxoplasma gondii pseudokinase inhibits host IRG resistance proteins.</title>
        <authorList>
            <person name="Fleckenstein M.C."/>
            <person name="Reese M.L."/>
            <person name="Koenen-Waisman S."/>
            <person name="Boothroyd J.C."/>
            <person name="Howard J.C."/>
            <person name="Steinfeldt T."/>
        </authorList>
    </citation>
    <scope>FUNCTION</scope>
    <scope>INTERACTION WITH MOUSE IRGA6/IIGP1</scope>
    <scope>DISRUPTION PHENOTYPE</scope>
</reference>
<reference evidence="17" key="7">
    <citation type="journal article" date="2012" name="PLoS Pathog.">
        <title>The polymorphic pseudokinase ROP5 controls virulence in Toxoplasma gondii by regulating the active kinase ROP18.</title>
        <authorList>
            <person name="Behnke M.S."/>
            <person name="Fentress S.J."/>
            <person name="Mashayekhi M."/>
            <person name="Li L.X."/>
            <person name="Taylor G.A."/>
            <person name="Sibley L.D."/>
        </authorList>
    </citation>
    <scope>FUNCTION</scope>
    <scope>LACK OF CATALYTIC ACTIVITY</scope>
    <scope>DOMAIN</scope>
    <scope>DISRUPTION PHENOTYPE</scope>
</reference>
<reference evidence="17" key="8">
    <citation type="journal article" date="2014" name="Cell Host Microbe">
        <title>The Toxoplasma pseudokinase ROP5 forms complexes with ROP18 and ROP17 kinases that synergize to control acute virulence in mice.</title>
        <authorList>
            <person name="Etheridge R.D."/>
            <person name="Alaganan A."/>
            <person name="Tang K."/>
            <person name="Lou H.J."/>
            <person name="Turk B.E."/>
            <person name="Sibley L.D."/>
        </authorList>
    </citation>
    <scope>IDENTIFICATION BY MASS SPECTROMETRY</scope>
    <scope>INTERACTION WITH ROP17 AND ROP18</scope>
    <scope>SUBCELLULAR LOCATION</scope>
</reference>
<reference evidence="17" key="9">
    <citation type="journal article" date="2016" name="Cell. Microbiol.">
        <title>The Toxoplasma gondii rhoptry protein ROP18 is an Irga6-specific kinase and regulated by the dense granule protein GRA7.</title>
        <authorList>
            <person name="Hermanns T."/>
            <person name="Mueller U.B."/>
            <person name="Koenen-Waisman S."/>
            <person name="Howard J.C."/>
            <person name="Steinfeldt T."/>
        </authorList>
    </citation>
    <scope>INTERACTION WITH ROP18 AND GRA7</scope>
    <scope>DISRUPTION PHENOTYPE</scope>
</reference>
<reference evidence="17" key="10">
    <citation type="journal article" date="2016" name="Int. J. Parasitol.">
        <title>The ROP18 and ROP5 gene allele types are highly predictive of virulence in mice across globally distributed strains of Toxoplasma gondii.</title>
        <authorList>
            <person name="Shwab E.K."/>
            <person name="Jiang T."/>
            <person name="Pena H.F."/>
            <person name="Gennari S.M."/>
            <person name="Dubey J.P."/>
            <person name="Su C."/>
        </authorList>
    </citation>
    <scope>FUNCTION</scope>
    <scope>POLYMORPHISM</scope>
</reference>
<reference evidence="25 26" key="11">
    <citation type="journal article" date="2011" name="J. Biol. Chem.">
        <title>A conserved non-canonical motif in the pseudoactive site of the ROP5 pseudokinase domain mediates its effect on Toxoplasma virulence.</title>
        <authorList>
            <person name="Reese M.L."/>
            <person name="Boothroyd J.C."/>
        </authorList>
    </citation>
    <scope>X-RAY CRYSTALLOGRAPHY (1.72 ANGSTROMS) OF 175-541 IN COMPLEX WITH ATP AND MG(2+)</scope>
    <scope>FUNCTION</scope>
    <scope>LACK OF CATALYTIC ACTIVITY</scope>
    <scope>SUBCELLULAR LOCATION</scope>
    <scope>DOMAIN</scope>
    <scope>POLYMORPHISM</scope>
    <scope>DISRUPTION PHENOTYPE</scope>
    <scope>DISULFIDE BOND</scope>
    <scope>MUTAGENESIS OF HIS-389</scope>
    <scope>VARIANT ARG-389</scope>
</reference>
<reference evidence="27" key="12">
    <citation type="journal article" date="2014" name="J. Biol. Chem.">
        <title>The Toxoplasma pseudokinase ROP5 is an allosteric inhibitor of the immunity-related GTPases.</title>
        <authorList>
            <person name="Reese M.L."/>
            <person name="Shah N."/>
            <person name="Boothroyd J.C."/>
        </authorList>
    </citation>
    <scope>X-RAY CRYSTALLOGRAPHY (1.70 ANGSTROMS) OF 175-541 IN COMPLEX WITH MOUSE IRGA6/IIGP1 AND ADP</scope>
    <scope>FUNCTION</scope>
    <scope>INTERACTION WITH MOUSE IRGA6/IIGP1</scope>
    <scope>DISULFIDE BOND</scope>
</reference>
<gene>
    <name evidence="21" type="primary">ROP5</name>
    <name evidence="18" type="synonym">ROP5B</name>
    <name evidence="23" type="ORF">TGRH88_057710</name>
</gene>
<proteinExistence type="evidence at protein level"/>
<name>ROP5_TOXGO</name>
<protein>
    <recommendedName>
        <fullName evidence="15 16">Polymorphic pseudokinase ROP5</fullName>
    </recommendedName>
    <alternativeName>
        <fullName evidence="18 19">Rhoptry protein 5B</fullName>
    </alternativeName>
    <alternativeName>
        <fullName evidence="23">Rhoptry protein ROP5</fullName>
    </alternativeName>
    <alternativeName>
        <fullName evidence="21">Type I rhoptry protein 5</fullName>
    </alternativeName>
    <alternativeName>
        <fullName evidence="22">Type III rhoptry protein 5</fullName>
    </alternativeName>
</protein>
<accession>F2YGR7</accession>
<keyword id="KW-0002">3D-structure</keyword>
<keyword id="KW-0067">ATP-binding</keyword>
<keyword id="KW-0968">Cytoplasmic vesicle</keyword>
<keyword id="KW-1015">Disulfide bond</keyword>
<keyword id="KW-0325">Glycoprotein</keyword>
<keyword id="KW-0479">Metal-binding</keyword>
<keyword id="KW-0547">Nucleotide-binding</keyword>
<keyword id="KW-1185">Reference proteome</keyword>
<keyword id="KW-0964">Secreted</keyword>
<keyword id="KW-0732">Signal</keyword>
<keyword id="KW-0843">Virulence</keyword>
<evidence type="ECO:0000255" key="1"/>
<evidence type="ECO:0000255" key="2">
    <source>
        <dbReference type="PROSITE-ProRule" id="PRU00159"/>
    </source>
</evidence>
<evidence type="ECO:0000255" key="3">
    <source>
        <dbReference type="PROSITE-ProRule" id="PRU00498"/>
    </source>
</evidence>
<evidence type="ECO:0000269" key="4">
    <source>
    </source>
</evidence>
<evidence type="ECO:0000269" key="5">
    <source>
    </source>
</evidence>
<evidence type="ECO:0000269" key="6">
    <source>
    </source>
</evidence>
<evidence type="ECO:0000269" key="7">
    <source>
    </source>
</evidence>
<evidence type="ECO:0000269" key="8">
    <source>
    </source>
</evidence>
<evidence type="ECO:0000269" key="9">
    <source>
    </source>
</evidence>
<evidence type="ECO:0000269" key="10">
    <source>
    </source>
</evidence>
<evidence type="ECO:0000269" key="11">
    <source>
    </source>
</evidence>
<evidence type="ECO:0000269" key="12">
    <source>
    </source>
</evidence>
<evidence type="ECO:0000269" key="13">
    <source>
    </source>
</evidence>
<evidence type="ECO:0000269" key="14">
    <source>
    </source>
</evidence>
<evidence type="ECO:0000303" key="15">
    <source>
    </source>
</evidence>
<evidence type="ECO:0000303" key="16">
    <source>
    </source>
</evidence>
<evidence type="ECO:0000305" key="17"/>
<evidence type="ECO:0000312" key="18">
    <source>
        <dbReference type="EMBL" id="AEA41142.1"/>
    </source>
</evidence>
<evidence type="ECO:0000312" key="19">
    <source>
        <dbReference type="EMBL" id="AFO37831.1"/>
    </source>
</evidence>
<evidence type="ECO:0000312" key="20">
    <source>
        <dbReference type="EMBL" id="AFO37833.1"/>
    </source>
</evidence>
<evidence type="ECO:0000312" key="21">
    <source>
        <dbReference type="EMBL" id="DAA34829.1"/>
    </source>
</evidence>
<evidence type="ECO:0000312" key="22">
    <source>
        <dbReference type="EMBL" id="DAA34833.1"/>
    </source>
</evidence>
<evidence type="ECO:0000312" key="23">
    <source>
        <dbReference type="EMBL" id="KAF4638163.1"/>
    </source>
</evidence>
<evidence type="ECO:0000312" key="24">
    <source>
        <dbReference type="Proteomes" id="UP000557509"/>
    </source>
</evidence>
<evidence type="ECO:0007744" key="25">
    <source>
        <dbReference type="PDB" id="3Q5Z"/>
    </source>
</evidence>
<evidence type="ECO:0007744" key="26">
    <source>
        <dbReference type="PDB" id="3Q60"/>
    </source>
</evidence>
<evidence type="ECO:0007744" key="27">
    <source>
        <dbReference type="PDB" id="4LV5"/>
    </source>
</evidence>
<dbReference type="EMBL" id="HQ916448">
    <property type="protein sequence ID" value="AEA41142.1"/>
    <property type="molecule type" value="Genomic_DNA"/>
</dbReference>
<dbReference type="EMBL" id="JQ743744">
    <property type="protein sequence ID" value="AFO37831.1"/>
    <property type="molecule type" value="Genomic_DNA"/>
</dbReference>
<dbReference type="EMBL" id="JQ743746">
    <property type="protein sequence ID" value="AFO37833.1"/>
    <property type="molecule type" value="Genomic_DNA"/>
</dbReference>
<dbReference type="EMBL" id="BK008052">
    <property type="protein sequence ID" value="DAA34829.1"/>
    <property type="molecule type" value="Genomic_DNA"/>
</dbReference>
<dbReference type="EMBL" id="BK008056">
    <property type="protein sequence ID" value="DAA34833.1"/>
    <property type="molecule type" value="Genomic_DNA"/>
</dbReference>
<dbReference type="EMBL" id="JAAUHK010000197">
    <property type="protein sequence ID" value="KAF4638163.1"/>
    <property type="molecule type" value="Genomic_DNA"/>
</dbReference>
<dbReference type="PDB" id="3Q5Z">
    <property type="method" value="X-ray"/>
    <property type="resolution" value="1.90 A"/>
    <property type="chains" value="A=174-541"/>
</dbReference>
<dbReference type="PDB" id="3Q60">
    <property type="method" value="X-ray"/>
    <property type="resolution" value="1.72 A"/>
    <property type="chains" value="A=174-541"/>
</dbReference>
<dbReference type="PDB" id="4LV5">
    <property type="method" value="X-ray"/>
    <property type="resolution" value="1.70 A"/>
    <property type="chains" value="A=175-541"/>
</dbReference>
<dbReference type="PDBsum" id="3Q5Z"/>
<dbReference type="PDBsum" id="3Q60"/>
<dbReference type="PDBsum" id="4LV5"/>
<dbReference type="SMR" id="F2YGR7"/>
<dbReference type="VEuPathDB" id="ToxoDB:TGARI_258580"/>
<dbReference type="VEuPathDB" id="ToxoDB:TGCAST_308090"/>
<dbReference type="VEuPathDB" id="ToxoDB:TGCOUG_396220"/>
<dbReference type="VEuPathDB" id="ToxoDB:TGDOM2_308090"/>
<dbReference type="VEuPathDB" id="ToxoDB:TGFOU_308090"/>
<dbReference type="VEuPathDB" id="ToxoDB:TGGT1_308090"/>
<dbReference type="VEuPathDB" id="ToxoDB:TGMAS_417740"/>
<dbReference type="VEuPathDB" id="ToxoDB:TGME49_308090"/>
<dbReference type="VEuPathDB" id="ToxoDB:TGP89_239600"/>
<dbReference type="VEuPathDB" id="ToxoDB:TGP89_422270"/>
<dbReference type="VEuPathDB" id="ToxoDB:TGPRC2_308090"/>
<dbReference type="VEuPathDB" id="ToxoDB:TGRH88_057710"/>
<dbReference type="VEuPathDB" id="ToxoDB:TGRUB_433780"/>
<dbReference type="VEuPathDB" id="ToxoDB:TGVAND_308090"/>
<dbReference type="VEuPathDB" id="ToxoDB:TGVEG_308090"/>
<dbReference type="HOGENOM" id="CLU_462752_0_0_1"/>
<dbReference type="Proteomes" id="UP000557509">
    <property type="component" value="Unassembled WGS sequence"/>
</dbReference>
<dbReference type="GO" id="GO:0005524">
    <property type="term" value="F:ATP binding"/>
    <property type="evidence" value="ECO:0007669"/>
    <property type="project" value="UniProtKB-KW"/>
</dbReference>
<dbReference type="GO" id="GO:0046872">
    <property type="term" value="F:metal ion binding"/>
    <property type="evidence" value="ECO:0007669"/>
    <property type="project" value="UniProtKB-KW"/>
</dbReference>
<dbReference type="GO" id="GO:0004672">
    <property type="term" value="F:protein kinase activity"/>
    <property type="evidence" value="ECO:0007669"/>
    <property type="project" value="InterPro"/>
</dbReference>
<dbReference type="Gene3D" id="3.30.200.20">
    <property type="entry name" value="Phosphorylase Kinase, domain 1"/>
    <property type="match status" value="1"/>
</dbReference>
<dbReference type="Gene3D" id="1.10.510.10">
    <property type="entry name" value="Transferase(Phosphotransferase) domain 1"/>
    <property type="match status" value="1"/>
</dbReference>
<dbReference type="InterPro" id="IPR027916">
    <property type="entry name" value="Kinase-like_dom_Apicomplexa"/>
</dbReference>
<dbReference type="InterPro" id="IPR011009">
    <property type="entry name" value="Kinase-like_dom_sf"/>
</dbReference>
<dbReference type="InterPro" id="IPR000719">
    <property type="entry name" value="Prot_kinase_dom"/>
</dbReference>
<dbReference type="InterPro" id="IPR016815">
    <property type="entry name" value="Rhoptry_Rop2-like"/>
</dbReference>
<dbReference type="Pfam" id="PF14531">
    <property type="entry name" value="Kinase-like"/>
    <property type="match status" value="1"/>
</dbReference>
<dbReference type="PIRSF" id="PIRSF022995">
    <property type="entry name" value="Rhoptry_ROP2"/>
    <property type="match status" value="1"/>
</dbReference>
<dbReference type="SMART" id="SM00220">
    <property type="entry name" value="S_TKc"/>
    <property type="match status" value="1"/>
</dbReference>
<dbReference type="SUPFAM" id="SSF56112">
    <property type="entry name" value="Protein kinase-like (PK-like)"/>
    <property type="match status" value="1"/>
</dbReference>
<dbReference type="PROSITE" id="PS50011">
    <property type="entry name" value="PROTEIN_KINASE_DOM"/>
    <property type="match status" value="1"/>
</dbReference>
<feature type="signal peptide" evidence="1">
    <location>
        <begin position="1"/>
        <end position="24"/>
    </location>
</feature>
<feature type="chain" id="PRO_5007656709" description="Polymorphic pseudokinase ROP5" evidence="1">
    <location>
        <begin position="25"/>
        <end position="549"/>
    </location>
</feature>
<feature type="domain" description="Protein kinase" evidence="2">
    <location>
        <begin position="234"/>
        <end position="527"/>
    </location>
</feature>
<feature type="binding site" evidence="7 26">
    <location>
        <position position="241"/>
    </location>
    <ligand>
        <name>ATP</name>
        <dbReference type="ChEBI" id="CHEBI:30616"/>
    </ligand>
</feature>
<feature type="binding site" evidence="12 27">
    <location>
        <position position="244"/>
    </location>
    <ligand>
        <name>ADP</name>
        <dbReference type="ChEBI" id="CHEBI:456216"/>
    </ligand>
</feature>
<feature type="binding site" evidence="7 26">
    <location>
        <position position="244"/>
    </location>
    <ligand>
        <name>ATP</name>
        <dbReference type="ChEBI" id="CHEBI:30616"/>
    </ligand>
</feature>
<feature type="binding site" evidence="7 26">
    <location>
        <position position="245"/>
    </location>
    <ligand>
        <name>ATP</name>
        <dbReference type="ChEBI" id="CHEBI:30616"/>
    </ligand>
</feature>
<feature type="binding site" evidence="12 27">
    <location>
        <position position="246"/>
    </location>
    <ligand>
        <name>ADP</name>
        <dbReference type="ChEBI" id="CHEBI:456216"/>
    </ligand>
</feature>
<feature type="binding site" evidence="7 26">
    <location>
        <position position="246"/>
    </location>
    <ligand>
        <name>ATP</name>
        <dbReference type="ChEBI" id="CHEBI:30616"/>
    </ligand>
</feature>
<feature type="binding site" evidence="12 27">
    <location>
        <position position="263"/>
    </location>
    <ligand>
        <name>ADP</name>
        <dbReference type="ChEBI" id="CHEBI:456216"/>
    </ligand>
</feature>
<feature type="binding site" evidence="7 26">
    <location>
        <position position="263"/>
    </location>
    <ligand>
        <name>ATP</name>
        <dbReference type="ChEBI" id="CHEBI:30616"/>
    </ligand>
</feature>
<feature type="binding site" evidence="12 27">
    <location>
        <position position="337"/>
    </location>
    <ligand>
        <name>ADP</name>
        <dbReference type="ChEBI" id="CHEBI:456216"/>
    </ligand>
</feature>
<feature type="binding site" evidence="7 26">
    <location>
        <position position="337"/>
    </location>
    <ligand>
        <name>ATP</name>
        <dbReference type="ChEBI" id="CHEBI:30616"/>
    </ligand>
</feature>
<feature type="binding site" evidence="12 27">
    <location>
        <position position="338"/>
    </location>
    <ligand>
        <name>ADP</name>
        <dbReference type="ChEBI" id="CHEBI:456216"/>
    </ligand>
</feature>
<feature type="binding site" evidence="7 26">
    <location>
        <position position="338"/>
    </location>
    <ligand>
        <name>ATP</name>
        <dbReference type="ChEBI" id="CHEBI:30616"/>
    </ligand>
</feature>
<feature type="binding site" evidence="12 27">
    <location>
        <position position="340"/>
    </location>
    <ligand>
        <name>ADP</name>
        <dbReference type="ChEBI" id="CHEBI:456216"/>
    </ligand>
</feature>
<feature type="binding site" evidence="7 26">
    <location>
        <position position="340"/>
    </location>
    <ligand>
        <name>ATP</name>
        <dbReference type="ChEBI" id="CHEBI:30616"/>
    </ligand>
</feature>
<feature type="binding site" evidence="7 26">
    <location>
        <position position="343"/>
    </location>
    <ligand>
        <name>ATP</name>
        <dbReference type="ChEBI" id="CHEBI:30616"/>
    </ligand>
</feature>
<feature type="binding site" evidence="12 27">
    <location>
        <position position="393"/>
    </location>
    <ligand>
        <name>ADP</name>
        <dbReference type="ChEBI" id="CHEBI:456216"/>
    </ligand>
</feature>
<feature type="binding site" evidence="7 26">
    <location>
        <position position="393"/>
    </location>
    <ligand>
        <name>ATP</name>
        <dbReference type="ChEBI" id="CHEBI:30616"/>
    </ligand>
</feature>
<feature type="binding site" evidence="7 26">
    <location>
        <position position="393"/>
    </location>
    <ligand>
        <name>Mg(2+)</name>
        <dbReference type="ChEBI" id="CHEBI:18420"/>
        <label>1</label>
    </ligand>
</feature>
<feature type="binding site" evidence="7 26">
    <location>
        <position position="407"/>
    </location>
    <ligand>
        <name>Mg(2+)</name>
        <dbReference type="ChEBI" id="CHEBI:18420"/>
        <label>2</label>
    </ligand>
</feature>
<feature type="glycosylation site" description="N-linked (GlcNAc...) asparagine" evidence="3">
    <location>
        <position position="434"/>
    </location>
</feature>
<feature type="disulfide bond" evidence="7 12 25 26 27">
    <location>
        <begin position="458"/>
        <end position="492"/>
    </location>
</feature>
<feature type="sequence variant" evidence="7">
    <original>H</original>
    <variation>R</variation>
    <location>
        <position position="389"/>
    </location>
</feature>
<feature type="mutagenesis site" description="Does not affect ATP-binding activity. Does not restore kinase activity." evidence="7">
    <original>H</original>
    <variation>D</variation>
    <location>
        <position position="389"/>
    </location>
</feature>
<comment type="function">
    <text evidence="5 6 7 8 9 10 12 14">Pseudokinase (PubMed:21708941, PubMed:23144612). Essential for virulence in the type I lineage (PubMed:21436047, PubMed:21586633, PubMed:21708941, PubMed:22802726, PubMed:26699401). Mediates parasite survival in mouse monocytes (PubMed:23144612). Required for the parasite ability to resist mouse innate immune effectors triggered by the IFN-gamma (IFNG) (PubMed:23144612). Reduces the accumulation of mouse IRGA6 (IIGP1) and IRGB6 (TGTP1/TGTP2), immunity-related GTPases (IRGs) that protect mice from infection by certain intracellular pathogens, on the parasitophorous vacuole and IRG-mediated killing of parasites by mouse cells (PubMed:22761577, PubMed:22802726). Regulates the activity of ROP18, an active kinase that targets IRGs to prevent IRG-mediated parasite killing by mouse cells (PubMed:22802726, PubMed:23144612). Acts as an allosteric inhibitor of mouse IRGA6 (IIGP1) (PubMed:22761577, PubMed:25118287). Does not affect IFN-gamma (IFNG)-mediated parasite killing in human cells that do not possess the large variety of IRGs (PubMed:22761577).</text>
</comment>
<comment type="subunit">
    <text evidence="8 9 11 12 13">Component of a complex at least composed of ROP18 and ROP5 (PubMed:24832449, PubMed:26247512). Interacts with GRA7 (PubMed:26247512). Interacts with ROP17 (PubMed:24832449). Interacts with mouse IRGA6/IIGP1; the interaction results in inhibition of IRGA6/IIGP1 GTPase activity and/or oligomerization (PubMed:22761577, PubMed:22802726, PubMed:25118287).</text>
</comment>
<comment type="subcellular location">
    <subcellularLocation>
        <location evidence="11">Secreted</location>
    </subcellularLocation>
    <subcellularLocation>
        <location evidence="4 11">Parasitophorous vacuole</location>
    </subcellularLocation>
    <subcellularLocation>
        <location evidence="7">Cytoplasmic vesicle</location>
        <location evidence="7">Secretory vesicle</location>
        <location evidence="7">Rhoptry</location>
    </subcellularLocation>
</comment>
<comment type="domain">
    <text evidence="2 7 10">The protein kinase domain is predicted to be catalytically inactive (By similarity) (PubMed:21708941, PubMed:23144612). However, ATP-binding properties are preserved (PubMed:21708941).</text>
</comment>
<comment type="polymorphism">
    <text evidence="5 6 7 8 14">Significant polymorphism exists between the major allele shared by type I and III and the major allele found in type II lineage (PubMed:21586633, PubMed:22761577). The ROP5 locus is differentially expanded in different Toxoplasma strains: depending on the strain, it may contain multiple isoforms, usually 4-5 unique sequences (PubMed:21436047, PubMed:22761577). Polymorphisms between the various allelic isoforms of ROP5 are concentrated in the predicted pseudokinase domain (PubMed:21436047, PubMed:21708941). The combined ROP18/ROP5 allele types are highly predictive of Toxoplasma virulence in mice (PubMed:26699401).</text>
</comment>
<comment type="disruption phenotype">
    <text evidence="5 6 7 9 10 13">Gene knockout results in reduced virulence in mice (PubMed:21436047, PubMed:21586633, PubMed:21708941, PubMed:23144612). Recruitment of host monocytes to the site of infection in mice (PubMed:23144612). Faster clearance of parasites from mouse monocytes (PubMed:23144612). Reduced levels of mouse IRGA6/IIGP1 phosphorylation following Toxoplasma gondii infection (PubMed:26247512). Increased recruitment of immunity-related GTPases (IRGs) to parasitophorous vacuole membrane (PubMed:22802726). No significant effects on host gene expression (PubMed:23144612). No significant effects on parasite growth in vitro (PubMed:21436047, PubMed:21586633).</text>
</comment>
<comment type="similarity">
    <text evidence="17">Belongs to the protein kinase superfamily. Ser/Thr protein kinase family.</text>
</comment>
<comment type="caution">
    <text evidence="8 9 10 11 13">ROP18 and ROP5 are identified as components of the rhoptry kinase complex (PubMed:24832449, PubMed:26247512). However, some studies fail to confirm such an interaction between ROP18 and ROP5 (PubMed:22761577, PubMed:23144612). Additionally, two reports indicate that ROP5 modulates kinase activity of ROP18 (PubMed:22802726, PubMed:23144612). Another study, however, suggests that ROP5 is not necessary for ROP18 kinase activity (PubMed:22761577).</text>
</comment>